<evidence type="ECO:0000250" key="1"/>
<evidence type="ECO:0000256" key="2">
    <source>
        <dbReference type="SAM" id="MobiDB-lite"/>
    </source>
</evidence>
<evidence type="ECO:0000305" key="3"/>
<sequence>MAGGKGKSSGGKSSGGKTSGVEGPKKQQSHSARAGLQFPCGRVKRFLKQNTQNKMRVGAKAAVYVTAVLEYLTAEVLELAGNAAKDLKVKRITPRHLQLAIRGDEELDTLIRATIAFGGVLPHINRALLLKVEQKKKAKAQEA</sequence>
<reference key="1">
    <citation type="journal article" date="2003" name="Nucleic Acids Res.">
        <title>What's in the genome of a filamentous fungus? Analysis of the Neurospora genome sequence.</title>
        <authorList>
            <person name="Mannhaupt G."/>
            <person name="Montrone C."/>
            <person name="Haase D."/>
            <person name="Mewes H.-W."/>
            <person name="Aign V."/>
            <person name="Hoheisel J.D."/>
            <person name="Fartmann B."/>
            <person name="Nyakatura G."/>
            <person name="Kempken F."/>
            <person name="Maier J."/>
            <person name="Schulte U."/>
        </authorList>
    </citation>
    <scope>NUCLEOTIDE SEQUENCE [LARGE SCALE GENOMIC DNA]</scope>
    <source>
        <strain>ATCC 24698 / 74-OR23-1A / CBS 708.71 / DSM 1257 / FGSC 987</strain>
    </source>
</reference>
<reference key="2">
    <citation type="journal article" date="2003" name="Nature">
        <title>The genome sequence of the filamentous fungus Neurospora crassa.</title>
        <authorList>
            <person name="Galagan J.E."/>
            <person name="Calvo S.E."/>
            <person name="Borkovich K.A."/>
            <person name="Selker E.U."/>
            <person name="Read N.D."/>
            <person name="Jaffe D.B."/>
            <person name="FitzHugh W."/>
            <person name="Ma L.-J."/>
            <person name="Smirnov S."/>
            <person name="Purcell S."/>
            <person name="Rehman B."/>
            <person name="Elkins T."/>
            <person name="Engels R."/>
            <person name="Wang S."/>
            <person name="Nielsen C.B."/>
            <person name="Butler J."/>
            <person name="Endrizzi M."/>
            <person name="Qui D."/>
            <person name="Ianakiev P."/>
            <person name="Bell-Pedersen D."/>
            <person name="Nelson M.A."/>
            <person name="Werner-Washburne M."/>
            <person name="Selitrennikoff C.P."/>
            <person name="Kinsey J.A."/>
            <person name="Braun E.L."/>
            <person name="Zelter A."/>
            <person name="Schulte U."/>
            <person name="Kothe G.O."/>
            <person name="Jedd G."/>
            <person name="Mewes H.-W."/>
            <person name="Staben C."/>
            <person name="Marcotte E."/>
            <person name="Greenberg D."/>
            <person name="Roy A."/>
            <person name="Foley K."/>
            <person name="Naylor J."/>
            <person name="Stange-Thomann N."/>
            <person name="Barrett R."/>
            <person name="Gnerre S."/>
            <person name="Kamal M."/>
            <person name="Kamvysselis M."/>
            <person name="Mauceli E.W."/>
            <person name="Bielke C."/>
            <person name="Rudd S."/>
            <person name="Frishman D."/>
            <person name="Krystofova S."/>
            <person name="Rasmussen C."/>
            <person name="Metzenberg R.L."/>
            <person name="Perkins D.D."/>
            <person name="Kroken S."/>
            <person name="Cogoni C."/>
            <person name="Macino G."/>
            <person name="Catcheside D.E.A."/>
            <person name="Li W."/>
            <person name="Pratt R.J."/>
            <person name="Osmani S.A."/>
            <person name="DeSouza C.P.C."/>
            <person name="Glass N.L."/>
            <person name="Orbach M.J."/>
            <person name="Berglund J.A."/>
            <person name="Voelker R."/>
            <person name="Yarden O."/>
            <person name="Plamann M."/>
            <person name="Seiler S."/>
            <person name="Dunlap J.C."/>
            <person name="Radford A."/>
            <person name="Aramayo R."/>
            <person name="Natvig D.O."/>
            <person name="Alex L.A."/>
            <person name="Mannhaupt G."/>
            <person name="Ebbole D.J."/>
            <person name="Freitag M."/>
            <person name="Paulsen I."/>
            <person name="Sachs M.S."/>
            <person name="Lander E.S."/>
            <person name="Nusbaum C."/>
            <person name="Birren B.W."/>
        </authorList>
    </citation>
    <scope>NUCLEOTIDE SEQUENCE [LARGE SCALE GENOMIC DNA]</scope>
    <source>
        <strain>ATCC 24698 / 74-OR23-1A / CBS 708.71 / DSM 1257 / FGSC 987</strain>
    </source>
</reference>
<proteinExistence type="inferred from homology"/>
<name>H2AZ_NEUCR</name>
<keyword id="KW-0007">Acetylation</keyword>
<keyword id="KW-0010">Activator</keyword>
<keyword id="KW-0156">Chromatin regulator</keyword>
<keyword id="KW-0158">Chromosome</keyword>
<keyword id="KW-0238">DNA-binding</keyword>
<keyword id="KW-0544">Nucleosome core</keyword>
<keyword id="KW-0539">Nucleus</keyword>
<keyword id="KW-1185">Reference proteome</keyword>
<keyword id="KW-0804">Transcription</keyword>
<keyword id="KW-0805">Transcription regulation</keyword>
<accession>Q873G4</accession>
<accession>Q1K8L9</accession>
<accession>V5IN15</accession>
<dbReference type="EMBL" id="BX284748">
    <property type="protein sequence ID" value="CAD70344.1"/>
    <property type="molecule type" value="Genomic_DNA"/>
</dbReference>
<dbReference type="EMBL" id="CM002237">
    <property type="protein sequence ID" value="ESA43531.1"/>
    <property type="molecule type" value="Genomic_DNA"/>
</dbReference>
<dbReference type="EMBL" id="CM002237">
    <property type="protein sequence ID" value="ESA43532.1"/>
    <property type="molecule type" value="Genomic_DNA"/>
</dbReference>
<dbReference type="EMBL" id="CM002237">
    <property type="protein sequence ID" value="ESA43533.1"/>
    <property type="molecule type" value="Genomic_DNA"/>
</dbReference>
<dbReference type="RefSeq" id="XP_011393560.1">
    <property type="nucleotide sequence ID" value="XM_011395258.1"/>
</dbReference>
<dbReference type="RefSeq" id="XP_011393561.1">
    <property type="nucleotide sequence ID" value="XM_011395259.1"/>
</dbReference>
<dbReference type="RefSeq" id="XP_011393562.1">
    <property type="nucleotide sequence ID" value="XM_011395260.1"/>
</dbReference>
<dbReference type="SMR" id="Q873G4"/>
<dbReference type="FunCoup" id="Q873G4">
    <property type="interactions" value="990"/>
</dbReference>
<dbReference type="STRING" id="367110.Q873G4"/>
<dbReference type="PaxDb" id="5141-EFNCRP00000006545"/>
<dbReference type="EnsemblFungi" id="ESA43531">
    <property type="protein sequence ID" value="ESA43531"/>
    <property type="gene ID" value="NCU05347"/>
</dbReference>
<dbReference type="EnsemblFungi" id="ESA43532">
    <property type="protein sequence ID" value="ESA43532"/>
    <property type="gene ID" value="NCU05347"/>
</dbReference>
<dbReference type="EnsemblFungi" id="ESA43533">
    <property type="protein sequence ID" value="ESA43533"/>
    <property type="gene ID" value="NCU05347"/>
</dbReference>
<dbReference type="GeneID" id="3879503"/>
<dbReference type="KEGG" id="ncr:NCU05347"/>
<dbReference type="VEuPathDB" id="FungiDB:NCU05347"/>
<dbReference type="HOGENOM" id="CLU_062828_2_1_1"/>
<dbReference type="InParanoid" id="Q873G4"/>
<dbReference type="OMA" id="MNKKGAP"/>
<dbReference type="Proteomes" id="UP000001805">
    <property type="component" value="Chromosome 6, Linkage Group II"/>
</dbReference>
<dbReference type="GO" id="GO:0000791">
    <property type="term" value="C:euchromatin"/>
    <property type="evidence" value="ECO:0007669"/>
    <property type="project" value="EnsemblFungi"/>
</dbReference>
<dbReference type="GO" id="GO:0000786">
    <property type="term" value="C:nucleosome"/>
    <property type="evidence" value="ECO:0000318"/>
    <property type="project" value="GO_Central"/>
</dbReference>
<dbReference type="GO" id="GO:0005634">
    <property type="term" value="C:nucleus"/>
    <property type="evidence" value="ECO:0000318"/>
    <property type="project" value="GO_Central"/>
</dbReference>
<dbReference type="GO" id="GO:0031490">
    <property type="term" value="F:chromatin DNA binding"/>
    <property type="evidence" value="ECO:0007669"/>
    <property type="project" value="EnsemblFungi"/>
</dbReference>
<dbReference type="GO" id="GO:0042802">
    <property type="term" value="F:identical protein binding"/>
    <property type="evidence" value="ECO:0007669"/>
    <property type="project" value="EnsemblFungi"/>
</dbReference>
<dbReference type="GO" id="GO:0046982">
    <property type="term" value="F:protein heterodimerization activity"/>
    <property type="evidence" value="ECO:0007669"/>
    <property type="project" value="InterPro"/>
</dbReference>
<dbReference type="GO" id="GO:0000978">
    <property type="term" value="F:RNA polymerase II cis-regulatory region sequence-specific DNA binding"/>
    <property type="evidence" value="ECO:0007669"/>
    <property type="project" value="EnsemblFungi"/>
</dbReference>
<dbReference type="GO" id="GO:0030527">
    <property type="term" value="F:structural constituent of chromatin"/>
    <property type="evidence" value="ECO:0000318"/>
    <property type="project" value="GO_Central"/>
</dbReference>
<dbReference type="GO" id="GO:0140898">
    <property type="term" value="P:CENP-A eviction from euchromatin"/>
    <property type="evidence" value="ECO:0007669"/>
    <property type="project" value="EnsemblFungi"/>
</dbReference>
<dbReference type="GO" id="GO:0031507">
    <property type="term" value="P:heterochromatin formation"/>
    <property type="evidence" value="ECO:0000318"/>
    <property type="project" value="GO_Central"/>
</dbReference>
<dbReference type="GO" id="GO:0070481">
    <property type="term" value="P:nuclear-transcribed mRNA catabolic process, non-stop decay"/>
    <property type="evidence" value="ECO:0007669"/>
    <property type="project" value="EnsemblFungi"/>
</dbReference>
<dbReference type="GO" id="GO:0006357">
    <property type="term" value="P:regulation of transcription by RNA polymerase II"/>
    <property type="evidence" value="ECO:0007669"/>
    <property type="project" value="EnsemblFungi"/>
</dbReference>
<dbReference type="GO" id="GO:0030466">
    <property type="term" value="P:silent mating-type cassette heterochromatin formation"/>
    <property type="evidence" value="ECO:0007669"/>
    <property type="project" value="EnsemblFungi"/>
</dbReference>
<dbReference type="GO" id="GO:0006368">
    <property type="term" value="P:transcription elongation by RNA polymerase II"/>
    <property type="evidence" value="ECO:0007669"/>
    <property type="project" value="EnsemblFungi"/>
</dbReference>
<dbReference type="CDD" id="cd00074">
    <property type="entry name" value="HFD_H2A"/>
    <property type="match status" value="1"/>
</dbReference>
<dbReference type="FunFam" id="1.10.20.10:FF:000021">
    <property type="entry name" value="Histone H2A"/>
    <property type="match status" value="1"/>
</dbReference>
<dbReference type="Gene3D" id="1.10.20.10">
    <property type="entry name" value="Histone, subunit A"/>
    <property type="match status" value="1"/>
</dbReference>
<dbReference type="InterPro" id="IPR009072">
    <property type="entry name" value="Histone-fold"/>
</dbReference>
<dbReference type="InterPro" id="IPR002119">
    <property type="entry name" value="Histone_H2A"/>
</dbReference>
<dbReference type="InterPro" id="IPR007125">
    <property type="entry name" value="Histone_H2A/H2B/H3"/>
</dbReference>
<dbReference type="InterPro" id="IPR032454">
    <property type="entry name" value="Histone_H2A_C"/>
</dbReference>
<dbReference type="PANTHER" id="PTHR23430">
    <property type="entry name" value="HISTONE H2A"/>
    <property type="match status" value="1"/>
</dbReference>
<dbReference type="Pfam" id="PF00125">
    <property type="entry name" value="Histone"/>
    <property type="match status" value="1"/>
</dbReference>
<dbReference type="Pfam" id="PF16211">
    <property type="entry name" value="Histone_H2A_C"/>
    <property type="match status" value="1"/>
</dbReference>
<dbReference type="PRINTS" id="PR00620">
    <property type="entry name" value="HISTONEH2A"/>
</dbReference>
<dbReference type="SMART" id="SM00414">
    <property type="entry name" value="H2A"/>
    <property type="match status" value="1"/>
</dbReference>
<dbReference type="SUPFAM" id="SSF47113">
    <property type="entry name" value="Histone-fold"/>
    <property type="match status" value="1"/>
</dbReference>
<gene>
    <name type="primary">hH2Az</name>
    <name type="synonym">htz1</name>
    <name type="ORF">B15B24.100</name>
    <name type="ORF">NCU05347</name>
</gene>
<organism>
    <name type="scientific">Neurospora crassa (strain ATCC 24698 / 74-OR23-1A / CBS 708.71 / DSM 1257 / FGSC 987)</name>
    <dbReference type="NCBI Taxonomy" id="367110"/>
    <lineage>
        <taxon>Eukaryota</taxon>
        <taxon>Fungi</taxon>
        <taxon>Dikarya</taxon>
        <taxon>Ascomycota</taxon>
        <taxon>Pezizomycotina</taxon>
        <taxon>Sordariomycetes</taxon>
        <taxon>Sordariomycetidae</taxon>
        <taxon>Sordariales</taxon>
        <taxon>Sordariaceae</taxon>
        <taxon>Neurospora</taxon>
    </lineage>
</organism>
<comment type="function">
    <text evidence="1">Variant histone H2A which can replace H2A in some nucleosomes. Nucleosomes wrap and compact DNA into chromatin, limiting DNA accessibility to the cellular machineries which require DNA as a template. Histones thereby play a central role in transcription regulation, DNA repair, DNA replication and chromosomal stability. DNA accessibility is regulated via a complex set of post-translational modifications of histones, also called histone code, and nucleosome remodeling. This variant is enriched at promoters, it may keep them in a repressed state until the appropriate activation signal is received. Near telomeres, it may counteract gene silencing caused by the spread of heterochromatin proteins. Required for the RNA polymerase II and spt15/TBP recruitment to the target genes. Involved in chromosome stability (By similarity).</text>
</comment>
<comment type="subunit">
    <text evidence="1">The nucleosome is a histone octamer containing two molecules each of H2A, H2B, H3 and H4 assembled in one H3-H4 heterotetramer and two H2A-H2B heterodimers. The octamer wraps approximately 147 bp of DNA. H2A or its variant H2A.Z forms a heterodimer with H2B. H2A.Z associates with the vps72/swc2 subunit of the SWR1 chromatin remodeling complex. Also interacts with rpo-9/rpb1/DNA-directed RNA polymerase II largest subunit (By similarity).</text>
</comment>
<comment type="subcellular location">
    <subcellularLocation>
        <location evidence="1">Nucleus</location>
    </subcellularLocation>
    <subcellularLocation>
        <location evidence="1">Chromosome</location>
    </subcellularLocation>
</comment>
<comment type="PTM">
    <text evidence="1">Acetylated once deposited into chromatin.</text>
</comment>
<comment type="similarity">
    <text evidence="3">Belongs to the histone H2A family.</text>
</comment>
<protein>
    <recommendedName>
        <fullName>Histone H2A.Z</fullName>
    </recommendedName>
</protein>
<feature type="chain" id="PRO_0000055336" description="Histone H2A.Z">
    <location>
        <begin position="1"/>
        <end position="143"/>
    </location>
</feature>
<feature type="region of interest" description="Disordered" evidence="2">
    <location>
        <begin position="1"/>
        <end position="37"/>
    </location>
</feature>
<feature type="compositionally biased region" description="Gly residues" evidence="2">
    <location>
        <begin position="1"/>
        <end position="18"/>
    </location>
</feature>
<feature type="modified residue" description="N6-acetyllysine" evidence="1">
    <location>
        <position position="5"/>
    </location>
</feature>
<feature type="modified residue" description="N6-acetyllysine" evidence="1">
    <location>
        <position position="12"/>
    </location>
</feature>